<feature type="chain" id="PRO_0000193530" description="Cytochrome b-c1 complex subunit 7">
    <location>
        <begin position="1"/>
        <end position="123"/>
    </location>
</feature>
<feature type="sequence conflict" description="In Ref. 3; AA sequence." evidence="2" ref="3">
    <original>M</original>
    <variation>V</variation>
    <location>
        <position position="71"/>
    </location>
</feature>
<accession>P48502</accession>
<organism>
    <name type="scientific">Solanum tuberosum</name>
    <name type="common">Potato</name>
    <dbReference type="NCBI Taxonomy" id="4113"/>
    <lineage>
        <taxon>Eukaryota</taxon>
        <taxon>Viridiplantae</taxon>
        <taxon>Streptophyta</taxon>
        <taxon>Embryophyta</taxon>
        <taxon>Tracheophyta</taxon>
        <taxon>Spermatophyta</taxon>
        <taxon>Magnoliopsida</taxon>
        <taxon>eudicotyledons</taxon>
        <taxon>Gunneridae</taxon>
        <taxon>Pentapetalae</taxon>
        <taxon>asterids</taxon>
        <taxon>lamiids</taxon>
        <taxon>Solanales</taxon>
        <taxon>Solanaceae</taxon>
        <taxon>Solanoideae</taxon>
        <taxon>Solaneae</taxon>
        <taxon>Solanum</taxon>
    </lineage>
</organism>
<proteinExistence type="evidence at protein level"/>
<sequence length="123" mass="14471">MASSFSRWLVDPKKNPLAAIHMKTLSSRLRNYGLRHDDLYDPMYDLDVKEALNRLPREIVDARNQRLLRAMDLSMKHQYLPEDLQAMQTPFRNYLQEMLALVKRESAEREALGALPLYQRTLP</sequence>
<evidence type="ECO:0000250" key="1">
    <source>
        <dbReference type="UniProtKB" id="P00128"/>
    </source>
</evidence>
<evidence type="ECO:0000305" key="2"/>
<dbReference type="EMBL" id="X79276">
    <property type="protein sequence ID" value="CAA55863.1"/>
    <property type="molecule type" value="mRNA"/>
</dbReference>
<dbReference type="PIR" id="T07368">
    <property type="entry name" value="T07368"/>
</dbReference>
<dbReference type="RefSeq" id="NP_001274887.1">
    <property type="nucleotide sequence ID" value="NM_001287958.1"/>
</dbReference>
<dbReference type="SMR" id="P48502"/>
<dbReference type="FunCoup" id="P48502">
    <property type="interactions" value="1969"/>
</dbReference>
<dbReference type="STRING" id="4113.P48502"/>
<dbReference type="PaxDb" id="4113-PGSC0003DMT400074807"/>
<dbReference type="EnsemblPlants" id="PGSC0003DMT400074807">
    <property type="protein sequence ID" value="PGSC0003DMT400074807"/>
    <property type="gene ID" value="PGSC0003DMG400029087"/>
</dbReference>
<dbReference type="EnsemblPlants" id="RHC08H1G1434.2.1">
    <property type="protein sequence ID" value="RHC08H1G1434.2.1"/>
    <property type="gene ID" value="RHC08H1G1434.2"/>
</dbReference>
<dbReference type="GeneID" id="102598697"/>
<dbReference type="Gramene" id="PGSC0003DMT400074807">
    <property type="protein sequence ID" value="PGSC0003DMT400074807"/>
    <property type="gene ID" value="PGSC0003DMG400029087"/>
</dbReference>
<dbReference type="Gramene" id="RHC08H1G1434.2.1">
    <property type="protein sequence ID" value="RHC08H1G1434.2.1"/>
    <property type="gene ID" value="RHC08H1G1434.2"/>
</dbReference>
<dbReference type="KEGG" id="sot:102598697"/>
<dbReference type="eggNOG" id="KOG3440">
    <property type="taxonomic scope" value="Eukaryota"/>
</dbReference>
<dbReference type="HOGENOM" id="CLU_115154_3_0_1"/>
<dbReference type="InParanoid" id="P48502"/>
<dbReference type="OMA" id="QTALHWV"/>
<dbReference type="OrthoDB" id="425749at2759"/>
<dbReference type="Proteomes" id="UP000011115">
    <property type="component" value="Unassembled WGS sequence"/>
</dbReference>
<dbReference type="GO" id="GO:0005743">
    <property type="term" value="C:mitochondrial inner membrane"/>
    <property type="evidence" value="ECO:0007669"/>
    <property type="project" value="UniProtKB-SubCell"/>
</dbReference>
<dbReference type="GO" id="GO:0045275">
    <property type="term" value="C:respiratory chain complex III"/>
    <property type="evidence" value="ECO:0000318"/>
    <property type="project" value="GO_Central"/>
</dbReference>
<dbReference type="GO" id="GO:0006122">
    <property type="term" value="P:mitochondrial electron transport, ubiquinol to cytochrome c"/>
    <property type="evidence" value="ECO:0000318"/>
    <property type="project" value="GO_Central"/>
</dbReference>
<dbReference type="FunFam" id="1.10.1090.10:FF:000002">
    <property type="entry name" value="Cytochrome b-c1 complex subunit 7"/>
    <property type="match status" value="1"/>
</dbReference>
<dbReference type="Gene3D" id="1.10.1090.10">
    <property type="entry name" value="Cytochrome b-c1 complex subunit 7"/>
    <property type="match status" value="1"/>
</dbReference>
<dbReference type="InterPro" id="IPR003197">
    <property type="entry name" value="QCR7"/>
</dbReference>
<dbReference type="InterPro" id="IPR036544">
    <property type="entry name" value="QCR7_sf"/>
</dbReference>
<dbReference type="PANTHER" id="PTHR12022:SF0">
    <property type="entry name" value="CYTOCHROME B-C1 COMPLEX SUBUNIT 7"/>
    <property type="match status" value="1"/>
</dbReference>
<dbReference type="PANTHER" id="PTHR12022">
    <property type="entry name" value="UBIQUINOL-CYTOCHROME C REDUCTASE COMPLEX 14 KD PROTEIN"/>
    <property type="match status" value="1"/>
</dbReference>
<dbReference type="Pfam" id="PF02271">
    <property type="entry name" value="UCR_14kD"/>
    <property type="match status" value="1"/>
</dbReference>
<dbReference type="PIRSF" id="PIRSF000022">
    <property type="entry name" value="Bc1_14K"/>
    <property type="match status" value="1"/>
</dbReference>
<dbReference type="SUPFAM" id="SSF81524">
    <property type="entry name" value="14 kDa protein of cytochrome bc1 complex (Ubiquinol-cytochrome c reductase)"/>
    <property type="match status" value="1"/>
</dbReference>
<reference key="1">
    <citation type="journal article" date="1995" name="Plant Physiol.">
        <title>Molecular features and mitochondrial import pathway of the 14-kilodalton subunit of cytochrome c reductase from potato.</title>
        <authorList>
            <person name="Braun H.-P."/>
            <person name="Schmitz U.K."/>
        </authorList>
    </citation>
    <scope>NUCLEOTIDE SEQUENCE [MRNA]</scope>
    <source>
        <strain>cv. Desiree</strain>
        <tissue>Tuber</tissue>
    </source>
</reference>
<reference key="2">
    <citation type="journal article" date="2011" name="Nature">
        <title>Genome sequence and analysis of the tuber crop potato.</title>
        <authorList>
            <consortium name="The Potato Genome Sequencing Consortium"/>
        </authorList>
    </citation>
    <scope>NUCLEOTIDE SEQUENCE [LARGE SCALE GENOMIC DNA]</scope>
    <source>
        <strain>cv. DM1-3 516 R44</strain>
    </source>
</reference>
<reference key="3">
    <citation type="journal article" date="1994" name="Planta">
        <title>Molecular identification of the ten subunits of cytochrome-c reductase from potato mitochondria.</title>
        <authorList>
            <person name="Braun H.-P."/>
            <person name="Kruft V."/>
            <person name="Schmitz U.K."/>
        </authorList>
    </citation>
    <scope>PROTEIN SEQUENCE OF 14-23; 49-74; 76-91 AND 103-122</scope>
    <source>
        <strain>cv. Hansa</strain>
        <tissue>Tuber</tissue>
    </source>
</reference>
<keyword id="KW-0903">Direct protein sequencing</keyword>
<keyword id="KW-0249">Electron transport</keyword>
<keyword id="KW-0472">Membrane</keyword>
<keyword id="KW-0496">Mitochondrion</keyword>
<keyword id="KW-0999">Mitochondrion inner membrane</keyword>
<keyword id="KW-1185">Reference proteome</keyword>
<keyword id="KW-0679">Respiratory chain</keyword>
<keyword id="KW-0813">Transport</keyword>
<protein>
    <recommendedName>
        <fullName>Cytochrome b-c1 complex subunit 7</fullName>
    </recommendedName>
    <alternativeName>
        <fullName>CR14</fullName>
    </alternativeName>
    <alternativeName>
        <fullName>Complex III subunit 7</fullName>
    </alternativeName>
    <alternativeName>
        <fullName>Complex III subunit VII</fullName>
    </alternativeName>
    <alternativeName>
        <fullName>Ubiquinol-cytochrome c reductase complex 14 kDa protein</fullName>
    </alternativeName>
</protein>
<comment type="function">
    <text evidence="1">Component of the ubiquinol-cytochrome c oxidoreductase, a multisubunit transmembrane complex that is part of the mitochondrial electron transport chain which drives oxidative phosphorylation. The respiratory chain contains 3 multisubunit complexes succinate dehydrogenase (complex II, CII), ubiquinol-cytochrome c oxidoreductase (cytochrome b-c1 complex, complex III, CIII) and cytochrome c oxidase (complex IV, CIV), that cooperate to transfer electrons derived from NADH and succinate to molecular oxygen, creating an electrochemical gradient over the inner membrane that drives transmembrane transport and the ATP synthase. The cytochrome b-c1 complex catalyzes electron transfer from ubiquinol to cytochrome c, linking this redox reaction to translocation of protons across the mitochondrial inner membrane, with protons being carried across the membrane as hydrogens on the quinol. In the process called Q cycle, 2 protons are consumed from the matrix, 4 protons are released into the intermembrane space and 2 electrons are passed to cytochrome c.</text>
</comment>
<comment type="subunit">
    <text evidence="1">Component of the ubiquinol-cytochrome c oxidoreductase (cytochrome b-c1 complex, complex III, CIII), a multisubunit enzyme composed of 3 respiratory subunits cytochrome b, cytochrome c1 and Rieske protein, 2 core protein subunits, and additional low-molecular weight protein subunits. The complex exists as an obligatory dimer and forms supercomplexes (SCs) in the inner mitochondrial membrane with cytochrome c oxidase (complex IV, CIV).</text>
</comment>
<comment type="subcellular location">
    <subcellularLocation>
        <location evidence="1">Mitochondrion inner membrane</location>
        <topology evidence="1">Peripheral membrane protein</topology>
        <orientation evidence="1">Matrix side</orientation>
    </subcellularLocation>
</comment>
<comment type="PTM">
    <text>The N-terminus is blocked.</text>
</comment>
<comment type="similarity">
    <text evidence="2">Belongs to the UQCRB/QCR7 family.</text>
</comment>
<name>QCR7_SOLTU</name>